<feature type="chain" id="PRO_0000353395" description="DNA-directed RNA polymerase subunit beta'">
    <location>
        <begin position="1"/>
        <end position="1464"/>
    </location>
</feature>
<feature type="region of interest" description="Disordered" evidence="2">
    <location>
        <begin position="1435"/>
        <end position="1464"/>
    </location>
</feature>
<feature type="binding site" evidence="1">
    <location>
        <position position="541"/>
    </location>
    <ligand>
        <name>Mg(2+)</name>
        <dbReference type="ChEBI" id="CHEBI:18420"/>
    </ligand>
</feature>
<feature type="binding site" evidence="1">
    <location>
        <position position="543"/>
    </location>
    <ligand>
        <name>Mg(2+)</name>
        <dbReference type="ChEBI" id="CHEBI:18420"/>
    </ligand>
</feature>
<feature type="binding site" evidence="1">
    <location>
        <position position="545"/>
    </location>
    <ligand>
        <name>Mg(2+)</name>
        <dbReference type="ChEBI" id="CHEBI:18420"/>
    </ligand>
</feature>
<feature type="binding site" evidence="1">
    <location>
        <position position="1022"/>
    </location>
    <ligand>
        <name>Zn(2+)</name>
        <dbReference type="ChEBI" id="CHEBI:29105"/>
    </ligand>
</feature>
<feature type="binding site" evidence="1">
    <location>
        <position position="1098"/>
    </location>
    <ligand>
        <name>Zn(2+)</name>
        <dbReference type="ChEBI" id="CHEBI:29105"/>
    </ligand>
</feature>
<feature type="binding site" evidence="1">
    <location>
        <position position="1105"/>
    </location>
    <ligand>
        <name>Zn(2+)</name>
        <dbReference type="ChEBI" id="CHEBI:29105"/>
    </ligand>
</feature>
<feature type="binding site" evidence="1">
    <location>
        <position position="1108"/>
    </location>
    <ligand>
        <name>Zn(2+)</name>
        <dbReference type="ChEBI" id="CHEBI:29105"/>
    </ligand>
</feature>
<evidence type="ECO:0000255" key="1">
    <source>
        <dbReference type="HAMAP-Rule" id="MF_01322"/>
    </source>
</evidence>
<evidence type="ECO:0000256" key="2">
    <source>
        <dbReference type="SAM" id="MobiDB-lite"/>
    </source>
</evidence>
<evidence type="ECO:0000305" key="3"/>
<reference key="1">
    <citation type="journal article" date="2008" name="Infect. Immun.">
        <title>Genome of Mycoplasma arthritidis.</title>
        <authorList>
            <person name="Dybvig K."/>
            <person name="Zuhua C."/>
            <person name="Lao P."/>
            <person name="Jordan D.S."/>
            <person name="French C.T."/>
            <person name="Tu A.H."/>
            <person name="Loraine A.E."/>
        </authorList>
    </citation>
    <scope>NUCLEOTIDE SEQUENCE [LARGE SCALE GENOMIC DNA]</scope>
    <source>
        <strain>158L3-1</strain>
    </source>
</reference>
<gene>
    <name evidence="1" type="primary">rpoC</name>
    <name type="ordered locus">MARTH_orf213</name>
</gene>
<organism>
    <name type="scientific">Metamycoplasma arthritidis (strain 158L3-1)</name>
    <name type="common">Mycoplasma arthritidis</name>
    <dbReference type="NCBI Taxonomy" id="243272"/>
    <lineage>
        <taxon>Bacteria</taxon>
        <taxon>Bacillati</taxon>
        <taxon>Mycoplasmatota</taxon>
        <taxon>Mycoplasmoidales</taxon>
        <taxon>Metamycoplasmataceae</taxon>
        <taxon>Metamycoplasma</taxon>
    </lineage>
</organism>
<protein>
    <recommendedName>
        <fullName evidence="1">DNA-directed RNA polymerase subunit beta'</fullName>
        <shortName evidence="1">RNAP subunit beta'</shortName>
        <ecNumber evidence="1">2.7.7.6</ecNumber>
    </recommendedName>
    <alternativeName>
        <fullName evidence="1">RNA polymerase subunit beta'</fullName>
    </alternativeName>
    <alternativeName>
        <fullName evidence="1">Transcriptase subunit beta'</fullName>
    </alternativeName>
</protein>
<accession>B3PM77</accession>
<comment type="function">
    <text evidence="1">DNA-dependent RNA polymerase catalyzes the transcription of DNA into RNA using the four ribonucleoside triphosphates as substrates.</text>
</comment>
<comment type="catalytic activity">
    <reaction evidence="1">
        <text>RNA(n) + a ribonucleoside 5'-triphosphate = RNA(n+1) + diphosphate</text>
        <dbReference type="Rhea" id="RHEA:21248"/>
        <dbReference type="Rhea" id="RHEA-COMP:14527"/>
        <dbReference type="Rhea" id="RHEA-COMP:17342"/>
        <dbReference type="ChEBI" id="CHEBI:33019"/>
        <dbReference type="ChEBI" id="CHEBI:61557"/>
        <dbReference type="ChEBI" id="CHEBI:140395"/>
        <dbReference type="EC" id="2.7.7.6"/>
    </reaction>
</comment>
<comment type="cofactor">
    <cofactor evidence="1">
        <name>Mg(2+)</name>
        <dbReference type="ChEBI" id="CHEBI:18420"/>
    </cofactor>
    <text evidence="1">Binds 1 Mg(2+) ion per subunit.</text>
</comment>
<comment type="cofactor">
    <cofactor evidence="1">
        <name>Zn(2+)</name>
        <dbReference type="ChEBI" id="CHEBI:29105"/>
    </cofactor>
    <text evidence="3">Binds 1 Zn(2+) ion per subunit; 2 are expected compared to other organisms.</text>
</comment>
<comment type="subunit">
    <text evidence="1">The RNAP catalytic core consists of 2 alpha, 1 beta, 1 beta' and 1 omega subunit. When a sigma factor is associated with the core the holoenzyme is formed, which can initiate transcription.</text>
</comment>
<comment type="similarity">
    <text evidence="1">Belongs to the RNA polymerase beta' chain family.</text>
</comment>
<comment type="caution">
    <text evidence="3">The highly conserved N-terminal zinc-binding site of this subunit is not present in this sequence.</text>
</comment>
<keyword id="KW-0240">DNA-directed RNA polymerase</keyword>
<keyword id="KW-0460">Magnesium</keyword>
<keyword id="KW-0479">Metal-binding</keyword>
<keyword id="KW-0548">Nucleotidyltransferase</keyword>
<keyword id="KW-1185">Reference proteome</keyword>
<keyword id="KW-0804">Transcription</keyword>
<keyword id="KW-0808">Transferase</keyword>
<keyword id="KW-0862">Zinc</keyword>
<name>RPOC_META1</name>
<sequence length="1464" mass="165333">MKKSRKYATLDSDKIAKISLALATPDDVESWSHGEVTKPETINYKSYKPERGGLFDEIIFGPMIDYRCPICGHKYKKINEGSFCSKTELCKQEKVEILPKISRRNHMGHIKLNSPVVHFWFFKVDHSIIFKLLDLTVAGRPNTEPVRRIDLENLIYYKSHIVLESGGIKALPKNLIIDINVAAVIYKDALEELITRFEPGTEDYEDIRETLDNLIEKASSKIGQDYGIDFYELNEVIEHYSEAKIGTGAQAIEYLLKNLDLQKEKELVSAKIKKINDEEIMSGAKIASTSRQTREKLYKRLQVINAFIESKQEPTSMLIYNLPVIPADLRPLIQLDGGRHSTSDINELYRRVIIRNNRLKQWQEKDAPTLVIQNELRMIQEAVDALIDNARRSPNPVLSKDNRPFKSISDALTGKKGRFRQNLLGKRVDYSGRSVIVVGPNLKMHQCGIPREMAAKLFEPWIIHRLIEKEVATTIKNAKKMLEDQNPVIWPHIAEVIKGRLVLLNRAPTLHRLSIQAFEPVLVRGKAIRLHPLVCTPFNADFDGDQMAVHVPISERALLESRELMLANKNILGTKDGEPIINPSQDMILGIYYLTIEEPGALGEGRIFDNYEHMIRAYEAKKVSLHARVALPIEEVKNSKIKAFASRESQRYIISTVGKFIFNNIFPKSFPFIFDNKVTEATSLEQYSEKVNKYIIPAGTNVIEHIKMELPVLDAFNKKNIAKIIRYVFDKYVAALTLQDVAGVIDQLNDVPLSNIVLNYLNLKTYDDRKVDQEHAIILAALTRSATEKTKARSQRHIEGLEVPLNAEEKAEILDDVWFRYTNMVASILDDIKDLGFKYSSLSGITFAISDILETDKKPEYIAEGDAYIAQLKQYYNDGLISDDDRYSLTIKKWTDIKAKVQGELQQIIKENPRNPIITMINSGARGNISNYVQLAGMRGLMANNTKSTRADVKNERVVRSTVEIPVKSSFIEGLTAFEFYSSTHGTRKGATDTALNTAKSGYLTRRLVDVAQNIVVRKENCGSDYGHIVRDIVDTKNGQIIVPLKERIIGRYANKPIIGEKTKQELAKRNTLITDKLAQKIIDEGVKEVEIRSVLGCNTKNGVCKMCFGKDLATNRVVNIGEAVGIIAAQSIGEPGTQLTMRVFHTGGVAGAEDITGGFPRLIELIDAHEQPWGRPAVISPYEGEIVEDLVEDKNVNSHLLTIKVVNSKKETVNKKVHVYTTKKLRVKVGDHVKVGQKLSEGPVIVKELLELTDTITVQNYLLKEIQKIYRIQGIAISDKYIEIIIRQMMSKIVIHDPGDSKFFAGAIVDIFDYQEENATLLSQRKRPAFGKVVIKGAKQVPLLSDSFLAAASYQETSKILVHAAISSRSDSLSGLKENIIVGKKIPAGTALYPFESHSKYDIRPSIDYFRKPELETSDSEFIPVDLESYHQELEDEQQQIIEVDDSDISVEDEENDFYENED</sequence>
<dbReference type="EC" id="2.7.7.6" evidence="1"/>
<dbReference type="EMBL" id="CP001047">
    <property type="protein sequence ID" value="ACF07129.1"/>
    <property type="molecule type" value="Genomic_DNA"/>
</dbReference>
<dbReference type="RefSeq" id="WP_012498086.1">
    <property type="nucleotide sequence ID" value="NC_011025.1"/>
</dbReference>
<dbReference type="SMR" id="B3PM77"/>
<dbReference type="STRING" id="243272.MARTH_orf213"/>
<dbReference type="KEGG" id="mat:MARTH_orf213"/>
<dbReference type="eggNOG" id="COG0086">
    <property type="taxonomic scope" value="Bacteria"/>
</dbReference>
<dbReference type="HOGENOM" id="CLU_000524_3_1_14"/>
<dbReference type="Proteomes" id="UP000008812">
    <property type="component" value="Chromosome"/>
</dbReference>
<dbReference type="GO" id="GO:0000428">
    <property type="term" value="C:DNA-directed RNA polymerase complex"/>
    <property type="evidence" value="ECO:0007669"/>
    <property type="project" value="UniProtKB-KW"/>
</dbReference>
<dbReference type="GO" id="GO:0003677">
    <property type="term" value="F:DNA binding"/>
    <property type="evidence" value="ECO:0007669"/>
    <property type="project" value="UniProtKB-UniRule"/>
</dbReference>
<dbReference type="GO" id="GO:0003899">
    <property type="term" value="F:DNA-directed RNA polymerase activity"/>
    <property type="evidence" value="ECO:0007669"/>
    <property type="project" value="UniProtKB-UniRule"/>
</dbReference>
<dbReference type="GO" id="GO:0000287">
    <property type="term" value="F:magnesium ion binding"/>
    <property type="evidence" value="ECO:0007669"/>
    <property type="project" value="UniProtKB-UniRule"/>
</dbReference>
<dbReference type="GO" id="GO:0008270">
    <property type="term" value="F:zinc ion binding"/>
    <property type="evidence" value="ECO:0007669"/>
    <property type="project" value="UniProtKB-UniRule"/>
</dbReference>
<dbReference type="GO" id="GO:0006351">
    <property type="term" value="P:DNA-templated transcription"/>
    <property type="evidence" value="ECO:0007669"/>
    <property type="project" value="UniProtKB-UniRule"/>
</dbReference>
<dbReference type="CDD" id="cd02655">
    <property type="entry name" value="RNAP_beta'_C"/>
    <property type="match status" value="1"/>
</dbReference>
<dbReference type="CDD" id="cd01609">
    <property type="entry name" value="RNAP_beta'_N"/>
    <property type="match status" value="1"/>
</dbReference>
<dbReference type="Gene3D" id="1.10.132.30">
    <property type="match status" value="1"/>
</dbReference>
<dbReference type="Gene3D" id="1.10.150.390">
    <property type="match status" value="1"/>
</dbReference>
<dbReference type="Gene3D" id="1.10.1790.20">
    <property type="match status" value="1"/>
</dbReference>
<dbReference type="Gene3D" id="1.10.40.90">
    <property type="match status" value="1"/>
</dbReference>
<dbReference type="Gene3D" id="2.40.40.20">
    <property type="match status" value="1"/>
</dbReference>
<dbReference type="Gene3D" id="2.40.50.100">
    <property type="match status" value="1"/>
</dbReference>
<dbReference type="Gene3D" id="4.10.860.120">
    <property type="entry name" value="RNA polymerase II, clamp domain"/>
    <property type="match status" value="1"/>
</dbReference>
<dbReference type="Gene3D" id="1.10.274.100">
    <property type="entry name" value="RNA polymerase Rpb1, domain 3"/>
    <property type="match status" value="2"/>
</dbReference>
<dbReference type="HAMAP" id="MF_01322">
    <property type="entry name" value="RNApol_bact_RpoC"/>
    <property type="match status" value="1"/>
</dbReference>
<dbReference type="InterPro" id="IPR045867">
    <property type="entry name" value="DNA-dir_RpoC_beta_prime"/>
</dbReference>
<dbReference type="InterPro" id="IPR012754">
    <property type="entry name" value="DNA-dir_RpoC_beta_prime_bact"/>
</dbReference>
<dbReference type="InterPro" id="IPR000722">
    <property type="entry name" value="RNA_pol_asu"/>
</dbReference>
<dbReference type="InterPro" id="IPR006592">
    <property type="entry name" value="RNA_pol_N"/>
</dbReference>
<dbReference type="InterPro" id="IPR007080">
    <property type="entry name" value="RNA_pol_Rpb1_1"/>
</dbReference>
<dbReference type="InterPro" id="IPR007066">
    <property type="entry name" value="RNA_pol_Rpb1_3"/>
</dbReference>
<dbReference type="InterPro" id="IPR042102">
    <property type="entry name" value="RNA_pol_Rpb1_3_sf"/>
</dbReference>
<dbReference type="InterPro" id="IPR007083">
    <property type="entry name" value="RNA_pol_Rpb1_4"/>
</dbReference>
<dbReference type="InterPro" id="IPR007081">
    <property type="entry name" value="RNA_pol_Rpb1_5"/>
</dbReference>
<dbReference type="InterPro" id="IPR044893">
    <property type="entry name" value="RNA_pol_Rpb1_clamp_domain"/>
</dbReference>
<dbReference type="InterPro" id="IPR038120">
    <property type="entry name" value="Rpb1_funnel_sf"/>
</dbReference>
<dbReference type="NCBIfam" id="TIGR02386">
    <property type="entry name" value="rpoC_TIGR"/>
    <property type="match status" value="1"/>
</dbReference>
<dbReference type="PANTHER" id="PTHR19376">
    <property type="entry name" value="DNA-DIRECTED RNA POLYMERASE"/>
    <property type="match status" value="1"/>
</dbReference>
<dbReference type="PANTHER" id="PTHR19376:SF54">
    <property type="entry name" value="DNA-DIRECTED RNA POLYMERASE SUBUNIT BETA"/>
    <property type="match status" value="1"/>
</dbReference>
<dbReference type="Pfam" id="PF04997">
    <property type="entry name" value="RNA_pol_Rpb1_1"/>
    <property type="match status" value="1"/>
</dbReference>
<dbReference type="Pfam" id="PF00623">
    <property type="entry name" value="RNA_pol_Rpb1_2"/>
    <property type="match status" value="2"/>
</dbReference>
<dbReference type="Pfam" id="PF04983">
    <property type="entry name" value="RNA_pol_Rpb1_3"/>
    <property type="match status" value="1"/>
</dbReference>
<dbReference type="Pfam" id="PF05000">
    <property type="entry name" value="RNA_pol_Rpb1_4"/>
    <property type="match status" value="1"/>
</dbReference>
<dbReference type="Pfam" id="PF04998">
    <property type="entry name" value="RNA_pol_Rpb1_5"/>
    <property type="match status" value="1"/>
</dbReference>
<dbReference type="SMART" id="SM00663">
    <property type="entry name" value="RPOLA_N"/>
    <property type="match status" value="1"/>
</dbReference>
<dbReference type="SUPFAM" id="SSF64484">
    <property type="entry name" value="beta and beta-prime subunits of DNA dependent RNA-polymerase"/>
    <property type="match status" value="1"/>
</dbReference>
<proteinExistence type="inferred from homology"/>